<sequence>MENRDDEVEHQHSTMGSEGGTAGDGTPPPKRKGKFSTLGKIFKPWKWRKKKSSEKFKETSEVLERKMSMRRPRQELIEQGVLKELPDNESGEAHGHKAPYVKNGHTLPVGVGGSLALEQVHSPSESEFRINPVWLPQPEDRRARAPSDGDHRGALGPRASNQDDGRRGGWSVGTEDWKNNLAWHGEDIRRGGRAHAEMDKRPGLMKAPSEDGRRTRPEPDWKPTLPRHSSVEEGRGRRESDSSQYLPNSEMMRDTLREPLPPKQSIMPPKWLMTSTPEPGSDSLPRTPVHNPAAPSFCSSNSSSSSSAGKPLRNVSSAGANTAPPGGAPLTTSSAPCSMGTIPNHPSKQPPMPPPKPINRSNNPAIMAELTQGGMNLVPAKPSPPMPPKRTTPVTKRNPEDSPLTIASLPSILSEDMRANIPGGYQLPPPPPSPPLPTHIPPSPPRAHTHHLLHQHSYPYPLPQPLPVHFDPPSPPEDPPARDEDDYSDEEEEEEDDEDDEEPPPDHLPSPQSQPELEPRSRRCLVGELSVSVIPEGNNSSEEEEDEEDQHPEESDSDGPVLYKDDESDEDEEDDSPPSALASRVKRKDTLALKLSSRPSAPDRQAPERQAKSEHSGLSWQSKEQWEAIRTQIGTALTRRLSQRPTAEELEQRNILQPKNEADRQAEVREIKRRLTRKLSQRPTVAELQARKILRFHEYVEVTSAQDYDRRADKPWTKLTPADKAAIRKELNEFKSSEMEVHEESRIYTRFHRP</sequence>
<dbReference type="EMBL" id="AL954327">
    <property type="status" value="NOT_ANNOTATED_CDS"/>
    <property type="molecule type" value="Genomic_DNA"/>
</dbReference>
<dbReference type="EMBL" id="CR855299">
    <property type="status" value="NOT_ANNOTATED_CDS"/>
    <property type="molecule type" value="Genomic_DNA"/>
</dbReference>
<dbReference type="EMBL" id="BC058052">
    <property type="protein sequence ID" value="AAH58052.1"/>
    <property type="molecule type" value="mRNA"/>
</dbReference>
<dbReference type="RefSeq" id="NP_956964.1">
    <property type="nucleotide sequence ID" value="NM_200670.1"/>
</dbReference>
<dbReference type="SMR" id="Q6PEI3"/>
<dbReference type="FunCoup" id="Q6PEI3">
    <property type="interactions" value="507"/>
</dbReference>
<dbReference type="STRING" id="7955.ENSDARP00000044234"/>
<dbReference type="iPTMnet" id="Q6PEI3"/>
<dbReference type="PaxDb" id="7955-ENSDARP00000075509"/>
<dbReference type="Ensembl" id="ENSDART00000044235">
    <property type="protein sequence ID" value="ENSDARP00000044234"/>
    <property type="gene ID" value="ENSDARG00000032221"/>
</dbReference>
<dbReference type="GeneID" id="393643"/>
<dbReference type="KEGG" id="dre:393643"/>
<dbReference type="AGR" id="ZFIN:ZDB-GENE-040426-1131"/>
<dbReference type="CTD" id="393643"/>
<dbReference type="ZFIN" id="ZDB-GENE-040426-1131">
    <property type="gene designation" value="phactr4b"/>
</dbReference>
<dbReference type="eggNOG" id="KOG4339">
    <property type="taxonomic scope" value="Eukaryota"/>
</dbReference>
<dbReference type="InParanoid" id="Q6PEI3"/>
<dbReference type="OMA" id="RYHKQRR"/>
<dbReference type="OrthoDB" id="5563016at2759"/>
<dbReference type="TreeFam" id="TF316316"/>
<dbReference type="PRO" id="PR:Q6PEI3"/>
<dbReference type="Proteomes" id="UP000000437">
    <property type="component" value="Chromosome 16"/>
</dbReference>
<dbReference type="Bgee" id="ENSDARG00000032221">
    <property type="expression patterns" value="Expressed in early embryo and 32 other cell types or tissues"/>
</dbReference>
<dbReference type="ExpressionAtlas" id="Q6PEI3">
    <property type="expression patterns" value="baseline"/>
</dbReference>
<dbReference type="GO" id="GO:0005737">
    <property type="term" value="C:cytoplasm"/>
    <property type="evidence" value="ECO:0007669"/>
    <property type="project" value="UniProtKB-SubCell"/>
</dbReference>
<dbReference type="GO" id="GO:0030027">
    <property type="term" value="C:lamellipodium"/>
    <property type="evidence" value="ECO:0000250"/>
    <property type="project" value="UniProtKB"/>
</dbReference>
<dbReference type="GO" id="GO:0003779">
    <property type="term" value="F:actin binding"/>
    <property type="evidence" value="ECO:0000250"/>
    <property type="project" value="UniProtKB"/>
</dbReference>
<dbReference type="GO" id="GO:0008157">
    <property type="term" value="F:protein phosphatase 1 binding"/>
    <property type="evidence" value="ECO:0000250"/>
    <property type="project" value="UniProtKB"/>
</dbReference>
<dbReference type="GO" id="GO:0072542">
    <property type="term" value="F:protein phosphatase activator activity"/>
    <property type="evidence" value="ECO:0000250"/>
    <property type="project" value="UniProtKB"/>
</dbReference>
<dbReference type="GO" id="GO:0030036">
    <property type="term" value="P:actin cytoskeleton organization"/>
    <property type="evidence" value="ECO:0000250"/>
    <property type="project" value="UniProtKB"/>
</dbReference>
<dbReference type="GO" id="GO:0061386">
    <property type="term" value="P:closure of optic fissure"/>
    <property type="evidence" value="ECO:0000250"/>
    <property type="project" value="UniProtKB"/>
</dbReference>
<dbReference type="GO" id="GO:0048484">
    <property type="term" value="P:enteric nervous system development"/>
    <property type="evidence" value="ECO:0000250"/>
    <property type="project" value="UniProtKB"/>
</dbReference>
<dbReference type="GO" id="GO:2001045">
    <property type="term" value="P:negative regulation of integrin-mediated signaling pathway"/>
    <property type="evidence" value="ECO:0000250"/>
    <property type="project" value="UniProtKB"/>
</dbReference>
<dbReference type="GO" id="GO:0001755">
    <property type="term" value="P:neural crest cell migration"/>
    <property type="evidence" value="ECO:0000250"/>
    <property type="project" value="UniProtKB"/>
</dbReference>
<dbReference type="GO" id="GO:0001843">
    <property type="term" value="P:neural tube closure"/>
    <property type="evidence" value="ECO:0000250"/>
    <property type="project" value="UniProtKB"/>
</dbReference>
<dbReference type="GO" id="GO:0043085">
    <property type="term" value="P:positive regulation of catalytic activity"/>
    <property type="evidence" value="ECO:0000250"/>
    <property type="project" value="UniProtKB"/>
</dbReference>
<dbReference type="GO" id="GO:0051726">
    <property type="term" value="P:regulation of cell cycle"/>
    <property type="evidence" value="ECO:0000250"/>
    <property type="project" value="UniProtKB"/>
</dbReference>
<dbReference type="GO" id="GO:0007266">
    <property type="term" value="P:Rho protein signal transduction"/>
    <property type="evidence" value="ECO:0000250"/>
    <property type="project" value="UniProtKB"/>
</dbReference>
<dbReference type="Gene3D" id="6.10.140.1750">
    <property type="match status" value="1"/>
</dbReference>
<dbReference type="Gene3D" id="6.10.140.2130">
    <property type="match status" value="1"/>
</dbReference>
<dbReference type="InterPro" id="IPR004018">
    <property type="entry name" value="RPEL_repeat"/>
</dbReference>
<dbReference type="PANTHER" id="PTHR12751:SF4">
    <property type="entry name" value="PHOSPHATASE AND ACTIN REGULATOR 4"/>
    <property type="match status" value="1"/>
</dbReference>
<dbReference type="PANTHER" id="PTHR12751">
    <property type="entry name" value="PHOSPHATASE AND ACTIN REGULATOR PHACTR"/>
    <property type="match status" value="1"/>
</dbReference>
<dbReference type="Pfam" id="PF02755">
    <property type="entry name" value="RPEL"/>
    <property type="match status" value="3"/>
</dbReference>
<dbReference type="SMART" id="SM00707">
    <property type="entry name" value="RPEL"/>
    <property type="match status" value="3"/>
</dbReference>
<dbReference type="PROSITE" id="PS51073">
    <property type="entry name" value="RPEL"/>
    <property type="match status" value="3"/>
</dbReference>
<name>PHR4B_DANRE</name>
<protein>
    <recommendedName>
        <fullName>Phosphatase and actin regulator 4B</fullName>
    </recommendedName>
</protein>
<keyword id="KW-0009">Actin-binding</keyword>
<keyword id="KW-0966">Cell projection</keyword>
<keyword id="KW-0963">Cytoplasm</keyword>
<keyword id="KW-0217">Developmental protein</keyword>
<keyword id="KW-0524">Neurogenesis</keyword>
<keyword id="KW-0597">Phosphoprotein</keyword>
<keyword id="KW-1185">Reference proteome</keyword>
<keyword id="KW-0677">Repeat</keyword>
<organism>
    <name type="scientific">Danio rerio</name>
    <name type="common">Zebrafish</name>
    <name type="synonym">Brachydanio rerio</name>
    <dbReference type="NCBI Taxonomy" id="7955"/>
    <lineage>
        <taxon>Eukaryota</taxon>
        <taxon>Metazoa</taxon>
        <taxon>Chordata</taxon>
        <taxon>Craniata</taxon>
        <taxon>Vertebrata</taxon>
        <taxon>Euteleostomi</taxon>
        <taxon>Actinopterygii</taxon>
        <taxon>Neopterygii</taxon>
        <taxon>Teleostei</taxon>
        <taxon>Ostariophysi</taxon>
        <taxon>Cypriniformes</taxon>
        <taxon>Danionidae</taxon>
        <taxon>Danioninae</taxon>
        <taxon>Danio</taxon>
    </lineage>
</organism>
<comment type="function">
    <text evidence="1">Regulator of protein phosphatase 1 (PP1) required for neural tube and optic fissure closure, and enteric neural crest cell (ENCCs) migration during development. Acts as an activator of PP1. During neural tube closure, localizes to the ventral neural tube and activates PP1, leading to down-regulate cell proliferation within cranial neural tissue and the neural retina. Also acts as a regulator of migration of enteric neural crest cells (ENCCs) by activating PP1, leading to repression of the integrin signaling through the rho/rock pathway (By similarity).</text>
</comment>
<comment type="subunit">
    <text evidence="1">Binds ppp1ca and actin.</text>
</comment>
<comment type="subcellular location">
    <subcellularLocation>
        <location evidence="1">Cytoplasm</location>
    </subcellularLocation>
    <subcellularLocation>
        <location evidence="1">Cell projection</location>
        <location evidence="1">Lamellipodium</location>
    </subcellularLocation>
</comment>
<comment type="similarity">
    <text evidence="4">Belongs to the phosphatase and actin regulator family.</text>
</comment>
<proteinExistence type="evidence at protein level"/>
<gene>
    <name type="primary">phactr4b</name>
    <name type="ORF">zgc:63484</name>
</gene>
<feature type="chain" id="PRO_0000287309" description="Phosphatase and actin regulator 4B">
    <location>
        <begin position="1"/>
        <end position="754"/>
    </location>
</feature>
<feature type="repeat" description="RPEL 1">
    <location>
        <begin position="61"/>
        <end position="86"/>
    </location>
</feature>
<feature type="repeat" description="RPEL 2">
    <location>
        <begin position="635"/>
        <end position="660"/>
    </location>
</feature>
<feature type="repeat" description="RPEL 3">
    <location>
        <begin position="673"/>
        <end position="698"/>
    </location>
</feature>
<feature type="region of interest" description="Disordered" evidence="2">
    <location>
        <begin position="1"/>
        <end position="38"/>
    </location>
</feature>
<feature type="region of interest" description="Disordered" evidence="2">
    <location>
        <begin position="83"/>
        <end position="105"/>
    </location>
</feature>
<feature type="region of interest" description="Disordered" evidence="2">
    <location>
        <begin position="120"/>
        <end position="625"/>
    </location>
</feature>
<feature type="region of interest" description="Disordered" evidence="2">
    <location>
        <begin position="637"/>
        <end position="666"/>
    </location>
</feature>
<feature type="compositionally biased region" description="Basic and acidic residues" evidence="2">
    <location>
        <begin position="1"/>
        <end position="12"/>
    </location>
</feature>
<feature type="compositionally biased region" description="Basic and acidic residues" evidence="2">
    <location>
        <begin position="138"/>
        <end position="153"/>
    </location>
</feature>
<feature type="compositionally biased region" description="Basic and acidic residues" evidence="2">
    <location>
        <begin position="184"/>
        <end position="221"/>
    </location>
</feature>
<feature type="compositionally biased region" description="Basic and acidic residues" evidence="2">
    <location>
        <begin position="229"/>
        <end position="241"/>
    </location>
</feature>
<feature type="compositionally biased region" description="Low complexity" evidence="2">
    <location>
        <begin position="296"/>
        <end position="307"/>
    </location>
</feature>
<feature type="compositionally biased region" description="Low complexity" evidence="2">
    <location>
        <begin position="316"/>
        <end position="333"/>
    </location>
</feature>
<feature type="compositionally biased region" description="Pro residues" evidence="2">
    <location>
        <begin position="348"/>
        <end position="357"/>
    </location>
</feature>
<feature type="compositionally biased region" description="Pro residues" evidence="2">
    <location>
        <begin position="381"/>
        <end position="390"/>
    </location>
</feature>
<feature type="compositionally biased region" description="Pro residues" evidence="2">
    <location>
        <begin position="427"/>
        <end position="445"/>
    </location>
</feature>
<feature type="compositionally biased region" description="Pro residues" evidence="2">
    <location>
        <begin position="460"/>
        <end position="478"/>
    </location>
</feature>
<feature type="compositionally biased region" description="Acidic residues" evidence="2">
    <location>
        <begin position="483"/>
        <end position="503"/>
    </location>
</feature>
<feature type="compositionally biased region" description="Acidic residues" evidence="2">
    <location>
        <begin position="541"/>
        <end position="557"/>
    </location>
</feature>
<feature type="compositionally biased region" description="Acidic residues" evidence="2">
    <location>
        <begin position="566"/>
        <end position="576"/>
    </location>
</feature>
<feature type="compositionally biased region" description="Basic and acidic residues" evidence="2">
    <location>
        <begin position="605"/>
        <end position="615"/>
    </location>
</feature>
<feature type="modified residue" description="Phosphoserine" evidence="3">
    <location>
        <position position="642"/>
    </location>
</feature>
<feature type="sequence conflict" description="In Ref. 2; AAH58052." evidence="4" ref="2">
    <original>E</original>
    <variation>K</variation>
    <location>
        <position position="2"/>
    </location>
</feature>
<feature type="sequence conflict" description="In Ref. 2; AAH58052." evidence="4" ref="2">
    <original>P</original>
    <variation>L</variation>
    <location>
        <position position="99"/>
    </location>
</feature>
<feature type="sequence conflict" description="In Ref. 2; AAH58052." evidence="4" ref="2">
    <original>P</original>
    <variation>A</variation>
    <location>
        <position position="279"/>
    </location>
</feature>
<feature type="sequence conflict" description="In Ref. 2; AAH58052." evidence="4" ref="2">
    <original>P</original>
    <variation>S</variation>
    <location>
        <position position="325"/>
    </location>
</feature>
<feature type="sequence conflict" description="In Ref. 2; AAH58052." evidence="4" ref="2">
    <original>M</original>
    <variation>L</variation>
    <location>
        <position position="352"/>
    </location>
</feature>
<feature type="sequence conflict" description="In Ref. 2; AAH58052." evidence="4" ref="2">
    <original>A</original>
    <variation>D</variation>
    <location>
        <position position="368"/>
    </location>
</feature>
<feature type="sequence conflict" description="In Ref. 2; AAH58052." evidence="4" ref="2">
    <original>T</original>
    <variation>A</variation>
    <location>
        <position position="371"/>
    </location>
</feature>
<feature type="sequence conflict" description="In Ref. 2; AAH58052." evidence="4" ref="2">
    <original>D</original>
    <variation>E</variation>
    <location>
        <position position="478"/>
    </location>
</feature>
<evidence type="ECO:0000250" key="1"/>
<evidence type="ECO:0000256" key="2">
    <source>
        <dbReference type="SAM" id="MobiDB-lite"/>
    </source>
</evidence>
<evidence type="ECO:0000269" key="3">
    <source>
    </source>
</evidence>
<evidence type="ECO:0000305" key="4"/>
<accession>Q6PEI3</accession>
<accession>F1QNE2</accession>
<reference key="1">
    <citation type="journal article" date="2013" name="Nature">
        <title>The zebrafish reference genome sequence and its relationship to the human genome.</title>
        <authorList>
            <person name="Howe K."/>
            <person name="Clark M.D."/>
            <person name="Torroja C.F."/>
            <person name="Torrance J."/>
            <person name="Berthelot C."/>
            <person name="Muffato M."/>
            <person name="Collins J.E."/>
            <person name="Humphray S."/>
            <person name="McLaren K."/>
            <person name="Matthews L."/>
            <person name="McLaren S."/>
            <person name="Sealy I."/>
            <person name="Caccamo M."/>
            <person name="Churcher C."/>
            <person name="Scott C."/>
            <person name="Barrett J.C."/>
            <person name="Koch R."/>
            <person name="Rauch G.J."/>
            <person name="White S."/>
            <person name="Chow W."/>
            <person name="Kilian B."/>
            <person name="Quintais L.T."/>
            <person name="Guerra-Assuncao J.A."/>
            <person name="Zhou Y."/>
            <person name="Gu Y."/>
            <person name="Yen J."/>
            <person name="Vogel J.H."/>
            <person name="Eyre T."/>
            <person name="Redmond S."/>
            <person name="Banerjee R."/>
            <person name="Chi J."/>
            <person name="Fu B."/>
            <person name="Langley E."/>
            <person name="Maguire S.F."/>
            <person name="Laird G.K."/>
            <person name="Lloyd D."/>
            <person name="Kenyon E."/>
            <person name="Donaldson S."/>
            <person name="Sehra H."/>
            <person name="Almeida-King J."/>
            <person name="Loveland J."/>
            <person name="Trevanion S."/>
            <person name="Jones M."/>
            <person name="Quail M."/>
            <person name="Willey D."/>
            <person name="Hunt A."/>
            <person name="Burton J."/>
            <person name="Sims S."/>
            <person name="McLay K."/>
            <person name="Plumb B."/>
            <person name="Davis J."/>
            <person name="Clee C."/>
            <person name="Oliver K."/>
            <person name="Clark R."/>
            <person name="Riddle C."/>
            <person name="Elliot D."/>
            <person name="Threadgold G."/>
            <person name="Harden G."/>
            <person name="Ware D."/>
            <person name="Begum S."/>
            <person name="Mortimore B."/>
            <person name="Kerry G."/>
            <person name="Heath P."/>
            <person name="Phillimore B."/>
            <person name="Tracey A."/>
            <person name="Corby N."/>
            <person name="Dunn M."/>
            <person name="Johnson C."/>
            <person name="Wood J."/>
            <person name="Clark S."/>
            <person name="Pelan S."/>
            <person name="Griffiths G."/>
            <person name="Smith M."/>
            <person name="Glithero R."/>
            <person name="Howden P."/>
            <person name="Barker N."/>
            <person name="Lloyd C."/>
            <person name="Stevens C."/>
            <person name="Harley J."/>
            <person name="Holt K."/>
            <person name="Panagiotidis G."/>
            <person name="Lovell J."/>
            <person name="Beasley H."/>
            <person name="Henderson C."/>
            <person name="Gordon D."/>
            <person name="Auger K."/>
            <person name="Wright D."/>
            <person name="Collins J."/>
            <person name="Raisen C."/>
            <person name="Dyer L."/>
            <person name="Leung K."/>
            <person name="Robertson L."/>
            <person name="Ambridge K."/>
            <person name="Leongamornlert D."/>
            <person name="McGuire S."/>
            <person name="Gilderthorp R."/>
            <person name="Griffiths C."/>
            <person name="Manthravadi D."/>
            <person name="Nichol S."/>
            <person name="Barker G."/>
            <person name="Whitehead S."/>
            <person name="Kay M."/>
            <person name="Brown J."/>
            <person name="Murnane C."/>
            <person name="Gray E."/>
            <person name="Humphries M."/>
            <person name="Sycamore N."/>
            <person name="Barker D."/>
            <person name="Saunders D."/>
            <person name="Wallis J."/>
            <person name="Babbage A."/>
            <person name="Hammond S."/>
            <person name="Mashreghi-Mohammadi M."/>
            <person name="Barr L."/>
            <person name="Martin S."/>
            <person name="Wray P."/>
            <person name="Ellington A."/>
            <person name="Matthews N."/>
            <person name="Ellwood M."/>
            <person name="Woodmansey R."/>
            <person name="Clark G."/>
            <person name="Cooper J."/>
            <person name="Tromans A."/>
            <person name="Grafham D."/>
            <person name="Skuce C."/>
            <person name="Pandian R."/>
            <person name="Andrews R."/>
            <person name="Harrison E."/>
            <person name="Kimberley A."/>
            <person name="Garnett J."/>
            <person name="Fosker N."/>
            <person name="Hall R."/>
            <person name="Garner P."/>
            <person name="Kelly D."/>
            <person name="Bird C."/>
            <person name="Palmer S."/>
            <person name="Gehring I."/>
            <person name="Berger A."/>
            <person name="Dooley C.M."/>
            <person name="Ersan-Urun Z."/>
            <person name="Eser C."/>
            <person name="Geiger H."/>
            <person name="Geisler M."/>
            <person name="Karotki L."/>
            <person name="Kirn A."/>
            <person name="Konantz J."/>
            <person name="Konantz M."/>
            <person name="Oberlander M."/>
            <person name="Rudolph-Geiger S."/>
            <person name="Teucke M."/>
            <person name="Lanz C."/>
            <person name="Raddatz G."/>
            <person name="Osoegawa K."/>
            <person name="Zhu B."/>
            <person name="Rapp A."/>
            <person name="Widaa S."/>
            <person name="Langford C."/>
            <person name="Yang F."/>
            <person name="Schuster S.C."/>
            <person name="Carter N.P."/>
            <person name="Harrow J."/>
            <person name="Ning Z."/>
            <person name="Herrero J."/>
            <person name="Searle S.M."/>
            <person name="Enright A."/>
            <person name="Geisler R."/>
            <person name="Plasterk R.H."/>
            <person name="Lee C."/>
            <person name="Westerfield M."/>
            <person name="de Jong P.J."/>
            <person name="Zon L.I."/>
            <person name="Postlethwait J.H."/>
            <person name="Nusslein-Volhard C."/>
            <person name="Hubbard T.J."/>
            <person name="Roest Crollius H."/>
            <person name="Rogers J."/>
            <person name="Stemple D.L."/>
        </authorList>
    </citation>
    <scope>NUCLEOTIDE SEQUENCE [LARGE SCALE GENOMIC DNA]</scope>
    <source>
        <strain>Tuebingen</strain>
    </source>
</reference>
<reference key="2">
    <citation type="submission" date="2003-09" db="EMBL/GenBank/DDBJ databases">
        <authorList>
            <consortium name="NIH - Zebrafish Gene Collection (ZGC) project"/>
        </authorList>
    </citation>
    <scope>NUCLEOTIDE SEQUENCE [LARGE SCALE MRNA]</scope>
    <source>
        <strain>AB</strain>
    </source>
</reference>
<reference key="3">
    <citation type="journal article" date="2008" name="J. Proteome Res.">
        <title>Online automated in vivo zebrafish phosphoproteomics: from large-scale analysis down to a single embryo.</title>
        <authorList>
            <person name="Lemeer S."/>
            <person name="Pinkse M.W.H."/>
            <person name="Mohammed S."/>
            <person name="van Breukelen B."/>
            <person name="den Hertog J."/>
            <person name="Slijper M."/>
            <person name="Heck A.J.R."/>
        </authorList>
    </citation>
    <scope>PHOSPHORYLATION [LARGE SCALE ANALYSIS] AT SER-642</scope>
    <scope>IDENTIFICATION BY MASS SPECTROMETRY</scope>
    <source>
        <tissue>Embryo</tissue>
    </source>
</reference>